<proteinExistence type="predicted"/>
<name>LCIA_LACLC</name>
<reference key="1">
    <citation type="journal article" date="1991" name="Appl. Environ. Microbiol.">
        <title>Organization and nucleotide sequences of two lactococcal bacteriocin operons.</title>
        <authorList>
            <person name="van Belkum M.J."/>
            <person name="Hayema B.J."/>
            <person name="Jeeninga R.E."/>
            <person name="Kok J."/>
            <person name="Venema G."/>
        </authorList>
    </citation>
    <scope>NUCLEOTIDE SEQUENCE [GENOMIC DNA]</scope>
    <source>
        <strain>9B4</strain>
        <plasmid>p9B4-6</plasmid>
    </source>
</reference>
<reference key="2">
    <citation type="journal article" date="1991" name="J. Bacteriol.">
        <title>Lactococcin A, a new bacteriocin from Lactococcus lactis subsp. cremoris: isolation and characterization of the protein and its gene.</title>
        <authorList>
            <person name="Holo H."/>
            <person name="Nilssen O."/>
            <person name="Nes I.F."/>
        </authorList>
    </citation>
    <scope>NUCLEOTIDE SEQUENCE [GENOMIC DNA]</scope>
    <source>
        <strain>LMG 2130</strain>
    </source>
</reference>
<reference key="3">
    <citation type="journal article" date="1992" name="Appl. Environ. Microbiol.">
        <title>Cloning, sequencing, and expression in Escherichia coli of lcnB, a third bacteriocin determinant from the lactococcal bacteriocin plasmid p9B4-6.</title>
        <authorList>
            <person name="van Belkum M.J."/>
            <person name="Kok J."/>
            <person name="Venema G."/>
        </authorList>
    </citation>
    <scope>NUCLEOTIDE SEQUENCE [GENOMIC DNA] OF 75-98</scope>
    <source>
        <strain>9B4</strain>
        <plasmid>p9B4-6</plasmid>
    </source>
</reference>
<geneLocation type="plasmid">
    <name>p9B4-6</name>
</geneLocation>
<gene>
    <name type="primary">lciA</name>
</gene>
<keyword id="KW-0079">Bacteriocin immunity</keyword>
<keyword id="KW-0614">Plasmid</keyword>
<sequence length="98" mass="11164">MKKKQIEFENELRSMLATALEKDISQEERNALNIAEKALDNSEYLPKIILNLRKALTPLAINRTLNHDLSELYKFITSSKASNKNLGGGLIMSWGRLF</sequence>
<organism>
    <name type="scientific">Lactococcus lactis subsp. cremoris</name>
    <name type="common">Streptococcus cremoris</name>
    <dbReference type="NCBI Taxonomy" id="1359"/>
    <lineage>
        <taxon>Bacteria</taxon>
        <taxon>Bacillati</taxon>
        <taxon>Bacillota</taxon>
        <taxon>Bacilli</taxon>
        <taxon>Lactobacillales</taxon>
        <taxon>Streptococcaceae</taxon>
        <taxon>Lactococcus</taxon>
    </lineage>
</organism>
<accession>P0A3M8</accession>
<accession>Q00561</accession>
<protein>
    <recommendedName>
        <fullName>Lactococcin-A immunity protein</fullName>
    </recommendedName>
</protein>
<dbReference type="EMBL" id="S38128">
    <property type="protein sequence ID" value="AAB22371.1"/>
    <property type="molecule type" value="Genomic_DNA"/>
</dbReference>
<dbReference type="EMBL" id="M63675">
    <property type="protein sequence ID" value="AAA25164.1"/>
    <property type="molecule type" value="Genomic_DNA"/>
</dbReference>
<dbReference type="PIR" id="B39443">
    <property type="entry name" value="B39443"/>
</dbReference>
<dbReference type="PIR" id="E43943">
    <property type="entry name" value="E43943"/>
</dbReference>
<dbReference type="RefSeq" id="WP_015081787.1">
    <property type="nucleotide sequence ID" value="NZ_WJUW01000098.1"/>
</dbReference>
<dbReference type="SMR" id="P0A3M8"/>
<dbReference type="GO" id="GO:0030153">
    <property type="term" value="P:bacteriocin immunity"/>
    <property type="evidence" value="ECO:0007669"/>
    <property type="project" value="UniProtKB-KW"/>
</dbReference>
<dbReference type="CDD" id="cd21059">
    <property type="entry name" value="LciA-like"/>
    <property type="match status" value="1"/>
</dbReference>
<dbReference type="InterPro" id="IPR015046">
    <property type="entry name" value="LciA_Immunity-like"/>
</dbReference>
<dbReference type="Pfam" id="PF08951">
    <property type="entry name" value="EntA_Immun"/>
    <property type="match status" value="1"/>
</dbReference>
<feature type="chain" id="PRO_0000206198" description="Lactococcin-A immunity protein">
    <location>
        <begin position="1"/>
        <end position="98"/>
    </location>
</feature>
<comment type="function">
    <text>Imparts immunity to lactococcin-A to naturally sensitive host strains.</text>
</comment>